<name>DRS1_PHANO</name>
<sequence>MAPRIDDDFVFTISDHDDVSDDGGAEEIAAASAKLAGRGKKRKHTEDPDLNIRPKEAPSKKAKKDKKKGKKGKQAEPEPAAEDESDLEIAHPGEDVEGNDDIDSEFEFAVGDIDTGFVEEFDGWGNAEGTVGREQNAEKKSNAVDIDDIIERRQNKKMAEKDTMSDSEDEADKDDFSGFGEDDELLAEDGFGMGAGSDSDSEGDDEEDGDQDESKINNDSEGGAGESDDEDVAPHVPHPMDLEGAESDDAMSEQEDAVEAKKAAAFFAPEESESGKKKKGAKSIGSFHAMSLSRPIQKGLAAIGFTEPTPIQAKAIPIAMQGKDVVGGAETGSGKTAAFLIPILERLLYRPKKVPTTRVAIFMPTRELAVQCFNVATKLASFTDITFALLAGGFSSREQEVMLKTRPDVVIATPGRFIDHMHNTAAFQVEHLEILVLDEADRMLEEGFETQLNEILTTIPKSRQTMLFSATMTSTVDKLIRIGMDKPVRLMVDAKKHTVKGLTQEFIRLRQGKEDKRLAYLMYICEKIYTERVIIFFRQKKEAHRVRVVFALCGLKASELHGNMSQEQRIQAVEAFRSGKSSYLLATDVASRGLDIKNVSTVINYEAPQSHEIYLHRVGRTARAGRSGRACTLAAEPDRKVVKQAVKQSRDQGSKVVSRQVPVEETDRWMEKLRGLEDEIEDVLKEEKEERTLSITERDLKRGMNLIEHEAEIKSRPKRVWFETEKEKMAEREKGAAALNAAAGGSVKQKKKKLSGKDKKKLDARDERSEGKIWKKAKEDRGMDTNRAKEKKALAKNKSKKISKLSRR</sequence>
<evidence type="ECO:0000250" key="1"/>
<evidence type="ECO:0000255" key="2">
    <source>
        <dbReference type="PROSITE-ProRule" id="PRU00541"/>
    </source>
</evidence>
<evidence type="ECO:0000255" key="3">
    <source>
        <dbReference type="PROSITE-ProRule" id="PRU00542"/>
    </source>
</evidence>
<evidence type="ECO:0000256" key="4">
    <source>
        <dbReference type="SAM" id="MobiDB-lite"/>
    </source>
</evidence>
<evidence type="ECO:0000305" key="5"/>
<keyword id="KW-0067">ATP-binding</keyword>
<keyword id="KW-0347">Helicase</keyword>
<keyword id="KW-0378">Hydrolase</keyword>
<keyword id="KW-0547">Nucleotide-binding</keyword>
<keyword id="KW-0539">Nucleus</keyword>
<keyword id="KW-0690">Ribosome biogenesis</keyword>
<keyword id="KW-0694">RNA-binding</keyword>
<comment type="function">
    <text evidence="1">ATP-binding RNA helicase involved in ribosome assembly.</text>
</comment>
<comment type="catalytic activity">
    <reaction>
        <text>ATP + H2O = ADP + phosphate + H(+)</text>
        <dbReference type="Rhea" id="RHEA:13065"/>
        <dbReference type="ChEBI" id="CHEBI:15377"/>
        <dbReference type="ChEBI" id="CHEBI:15378"/>
        <dbReference type="ChEBI" id="CHEBI:30616"/>
        <dbReference type="ChEBI" id="CHEBI:43474"/>
        <dbReference type="ChEBI" id="CHEBI:456216"/>
        <dbReference type="EC" id="3.6.4.13"/>
    </reaction>
</comment>
<comment type="subunit">
    <text evidence="1">Associates with pre-ribosomal particles.</text>
</comment>
<comment type="subcellular location">
    <subcellularLocation>
        <location evidence="1">Nucleus</location>
        <location evidence="1">Nucleolus</location>
    </subcellularLocation>
</comment>
<comment type="domain">
    <text>The Q motif is unique to and characteristic of the DEAD box family of RNA helicases and controls ATP binding and hydrolysis.</text>
</comment>
<comment type="similarity">
    <text evidence="5">Belongs to the DEAD box helicase family. DDX27/DRS1 subfamily.</text>
</comment>
<protein>
    <recommendedName>
        <fullName>ATP-dependent RNA helicase DRS1</fullName>
        <ecNumber>3.6.4.13</ecNumber>
    </recommendedName>
</protein>
<proteinExistence type="inferred from homology"/>
<dbReference type="EC" id="3.6.4.13"/>
<dbReference type="EMBL" id="CH445327">
    <property type="protein sequence ID" value="EAT90179.1"/>
    <property type="molecule type" value="Genomic_DNA"/>
</dbReference>
<dbReference type="RefSeq" id="XP_001792589.1">
    <property type="nucleotide sequence ID" value="XM_001792537.1"/>
</dbReference>
<dbReference type="SMR" id="Q0V1Z7"/>
<dbReference type="FunCoup" id="Q0V1Z7">
    <property type="interactions" value="817"/>
</dbReference>
<dbReference type="STRING" id="321614.Q0V1Z7"/>
<dbReference type="EnsemblFungi" id="SNOT_01967">
    <property type="protein sequence ID" value="SNOT_01967"/>
    <property type="gene ID" value="SNOG_01967"/>
</dbReference>
<dbReference type="GeneID" id="5969439"/>
<dbReference type="KEGG" id="pno:SNOG_01967"/>
<dbReference type="VEuPathDB" id="FungiDB:JI435_019670"/>
<dbReference type="eggNOG" id="KOG0338">
    <property type="taxonomic scope" value="Eukaryota"/>
</dbReference>
<dbReference type="HOGENOM" id="CLU_003041_3_1_1"/>
<dbReference type="InParanoid" id="Q0V1Z7"/>
<dbReference type="OMA" id="MIDPPKQ"/>
<dbReference type="OrthoDB" id="10259843at2759"/>
<dbReference type="Proteomes" id="UP000001055">
    <property type="component" value="Unassembled WGS sequence"/>
</dbReference>
<dbReference type="GO" id="GO:0005730">
    <property type="term" value="C:nucleolus"/>
    <property type="evidence" value="ECO:0000318"/>
    <property type="project" value="GO_Central"/>
</dbReference>
<dbReference type="GO" id="GO:0030687">
    <property type="term" value="C:preribosome, large subunit precursor"/>
    <property type="evidence" value="ECO:0007669"/>
    <property type="project" value="EnsemblFungi"/>
</dbReference>
<dbReference type="GO" id="GO:0005524">
    <property type="term" value="F:ATP binding"/>
    <property type="evidence" value="ECO:0007669"/>
    <property type="project" value="UniProtKB-KW"/>
</dbReference>
<dbReference type="GO" id="GO:0016887">
    <property type="term" value="F:ATP hydrolysis activity"/>
    <property type="evidence" value="ECO:0007669"/>
    <property type="project" value="RHEA"/>
</dbReference>
<dbReference type="GO" id="GO:0003723">
    <property type="term" value="F:RNA binding"/>
    <property type="evidence" value="ECO:0007669"/>
    <property type="project" value="UniProtKB-KW"/>
</dbReference>
<dbReference type="GO" id="GO:0003724">
    <property type="term" value="F:RNA helicase activity"/>
    <property type="evidence" value="ECO:0007669"/>
    <property type="project" value="UniProtKB-EC"/>
</dbReference>
<dbReference type="GO" id="GO:0000027">
    <property type="term" value="P:ribosomal large subunit assembly"/>
    <property type="evidence" value="ECO:0007669"/>
    <property type="project" value="EnsemblFungi"/>
</dbReference>
<dbReference type="GO" id="GO:0006364">
    <property type="term" value="P:rRNA processing"/>
    <property type="evidence" value="ECO:0007669"/>
    <property type="project" value="EnsemblFungi"/>
</dbReference>
<dbReference type="CDD" id="cd17947">
    <property type="entry name" value="DEADc_DDX27"/>
    <property type="match status" value="1"/>
</dbReference>
<dbReference type="CDD" id="cd18787">
    <property type="entry name" value="SF2_C_DEAD"/>
    <property type="match status" value="1"/>
</dbReference>
<dbReference type="Gene3D" id="3.40.50.300">
    <property type="entry name" value="P-loop containing nucleotide triphosphate hydrolases"/>
    <property type="match status" value="2"/>
</dbReference>
<dbReference type="InterPro" id="IPR011545">
    <property type="entry name" value="DEAD/DEAH_box_helicase_dom"/>
</dbReference>
<dbReference type="InterPro" id="IPR050079">
    <property type="entry name" value="DEAD_box_RNA_helicase"/>
</dbReference>
<dbReference type="InterPro" id="IPR014001">
    <property type="entry name" value="Helicase_ATP-bd"/>
</dbReference>
<dbReference type="InterPro" id="IPR001650">
    <property type="entry name" value="Helicase_C-like"/>
</dbReference>
<dbReference type="InterPro" id="IPR027417">
    <property type="entry name" value="P-loop_NTPase"/>
</dbReference>
<dbReference type="InterPro" id="IPR000629">
    <property type="entry name" value="RNA-helicase_DEAD-box_CS"/>
</dbReference>
<dbReference type="InterPro" id="IPR014014">
    <property type="entry name" value="RNA_helicase_DEAD_Q_motif"/>
</dbReference>
<dbReference type="PANTHER" id="PTHR47959:SF1">
    <property type="entry name" value="ATP-DEPENDENT RNA HELICASE DBPA"/>
    <property type="match status" value="1"/>
</dbReference>
<dbReference type="PANTHER" id="PTHR47959">
    <property type="entry name" value="ATP-DEPENDENT RNA HELICASE RHLE-RELATED"/>
    <property type="match status" value="1"/>
</dbReference>
<dbReference type="Pfam" id="PF00270">
    <property type="entry name" value="DEAD"/>
    <property type="match status" value="1"/>
</dbReference>
<dbReference type="Pfam" id="PF00271">
    <property type="entry name" value="Helicase_C"/>
    <property type="match status" value="1"/>
</dbReference>
<dbReference type="SMART" id="SM00487">
    <property type="entry name" value="DEXDc"/>
    <property type="match status" value="1"/>
</dbReference>
<dbReference type="SMART" id="SM00490">
    <property type="entry name" value="HELICc"/>
    <property type="match status" value="1"/>
</dbReference>
<dbReference type="SUPFAM" id="SSF52540">
    <property type="entry name" value="P-loop containing nucleoside triphosphate hydrolases"/>
    <property type="match status" value="2"/>
</dbReference>
<dbReference type="PROSITE" id="PS00039">
    <property type="entry name" value="DEAD_ATP_HELICASE"/>
    <property type="match status" value="1"/>
</dbReference>
<dbReference type="PROSITE" id="PS51192">
    <property type="entry name" value="HELICASE_ATP_BIND_1"/>
    <property type="match status" value="1"/>
</dbReference>
<dbReference type="PROSITE" id="PS51194">
    <property type="entry name" value="HELICASE_CTER"/>
    <property type="match status" value="1"/>
</dbReference>
<dbReference type="PROSITE" id="PS51195">
    <property type="entry name" value="Q_MOTIF"/>
    <property type="match status" value="1"/>
</dbReference>
<organism>
    <name type="scientific">Phaeosphaeria nodorum (strain SN15 / ATCC MYA-4574 / FGSC 10173)</name>
    <name type="common">Glume blotch fungus</name>
    <name type="synonym">Parastagonospora nodorum</name>
    <dbReference type="NCBI Taxonomy" id="321614"/>
    <lineage>
        <taxon>Eukaryota</taxon>
        <taxon>Fungi</taxon>
        <taxon>Dikarya</taxon>
        <taxon>Ascomycota</taxon>
        <taxon>Pezizomycotina</taxon>
        <taxon>Dothideomycetes</taxon>
        <taxon>Pleosporomycetidae</taxon>
        <taxon>Pleosporales</taxon>
        <taxon>Pleosporineae</taxon>
        <taxon>Phaeosphaeriaceae</taxon>
        <taxon>Parastagonospora</taxon>
    </lineage>
</organism>
<feature type="chain" id="PRO_0000256023" description="ATP-dependent RNA helicase DRS1">
    <location>
        <begin position="1"/>
        <end position="808"/>
    </location>
</feature>
<feature type="domain" description="Helicase ATP-binding" evidence="2">
    <location>
        <begin position="316"/>
        <end position="490"/>
    </location>
</feature>
<feature type="domain" description="Helicase C-terminal" evidence="3">
    <location>
        <begin position="517"/>
        <end position="674"/>
    </location>
</feature>
<feature type="region of interest" description="Disordered" evidence="4">
    <location>
        <begin position="1"/>
        <end position="107"/>
    </location>
</feature>
<feature type="region of interest" description="Disordered" evidence="4">
    <location>
        <begin position="119"/>
        <end position="260"/>
    </location>
</feature>
<feature type="region of interest" description="Disordered" evidence="4">
    <location>
        <begin position="737"/>
        <end position="808"/>
    </location>
</feature>
<feature type="short sequence motif" description="Q motif">
    <location>
        <begin position="285"/>
        <end position="313"/>
    </location>
</feature>
<feature type="short sequence motif" description="DEAD box">
    <location>
        <begin position="438"/>
        <end position="441"/>
    </location>
</feature>
<feature type="compositionally biased region" description="Basic and acidic residues" evidence="4">
    <location>
        <begin position="44"/>
        <end position="59"/>
    </location>
</feature>
<feature type="compositionally biased region" description="Basic residues" evidence="4">
    <location>
        <begin position="60"/>
        <end position="72"/>
    </location>
</feature>
<feature type="compositionally biased region" description="Acidic residues" evidence="4">
    <location>
        <begin position="95"/>
        <end position="106"/>
    </location>
</feature>
<feature type="compositionally biased region" description="Basic and acidic residues" evidence="4">
    <location>
        <begin position="149"/>
        <end position="164"/>
    </location>
</feature>
<feature type="compositionally biased region" description="Acidic residues" evidence="4">
    <location>
        <begin position="199"/>
        <end position="211"/>
    </location>
</feature>
<feature type="compositionally biased region" description="Acidic residues" evidence="4">
    <location>
        <begin position="243"/>
        <end position="257"/>
    </location>
</feature>
<feature type="compositionally biased region" description="Low complexity" evidence="4">
    <location>
        <begin position="737"/>
        <end position="747"/>
    </location>
</feature>
<feature type="compositionally biased region" description="Basic and acidic residues" evidence="4">
    <location>
        <begin position="755"/>
        <end position="793"/>
    </location>
</feature>
<feature type="compositionally biased region" description="Basic residues" evidence="4">
    <location>
        <begin position="794"/>
        <end position="808"/>
    </location>
</feature>
<feature type="binding site" evidence="2">
    <location>
        <begin position="329"/>
        <end position="336"/>
    </location>
    <ligand>
        <name>ATP</name>
        <dbReference type="ChEBI" id="CHEBI:30616"/>
    </ligand>
</feature>
<accession>Q0V1Z7</accession>
<gene>
    <name type="primary">DRS1</name>
    <name type="ORF">SNOG_01967</name>
</gene>
<reference key="1">
    <citation type="journal article" date="2007" name="Plant Cell">
        <title>Dothideomycete-plant interactions illuminated by genome sequencing and EST analysis of the wheat pathogen Stagonospora nodorum.</title>
        <authorList>
            <person name="Hane J.K."/>
            <person name="Lowe R.G.T."/>
            <person name="Solomon P.S."/>
            <person name="Tan K.-C."/>
            <person name="Schoch C.L."/>
            <person name="Spatafora J.W."/>
            <person name="Crous P.W."/>
            <person name="Kodira C.D."/>
            <person name="Birren B.W."/>
            <person name="Galagan J.E."/>
            <person name="Torriani S.F.F."/>
            <person name="McDonald B.A."/>
            <person name="Oliver R.P."/>
        </authorList>
    </citation>
    <scope>NUCLEOTIDE SEQUENCE [LARGE SCALE GENOMIC DNA]</scope>
    <source>
        <strain>SN15 / ATCC MYA-4574 / FGSC 10173</strain>
    </source>
</reference>